<comment type="function">
    <text evidence="3 4">Involved in sphingolipid trihydroxy long-chain base (4-hydroxysphinganine) biosynthesis. Can use C18- and C20-sphinganine as substrates to produce C18- and C20-phytosphinganines (D-ribo-2-amino-1,3,4-trihydroxyoctadecane and -eicosane).</text>
</comment>
<comment type="catalytic activity">
    <reaction evidence="3">
        <text>a dihydroceramide + 2 Fe(II)-[cytochrome b5] + O2 + 2 H(+) = a phytoceramide + 2 Fe(III)-[cytochrome b5] + H2O</text>
        <dbReference type="Rhea" id="RHEA:55808"/>
        <dbReference type="Rhea" id="RHEA-COMP:10438"/>
        <dbReference type="Rhea" id="RHEA-COMP:10439"/>
        <dbReference type="ChEBI" id="CHEBI:15377"/>
        <dbReference type="ChEBI" id="CHEBI:15378"/>
        <dbReference type="ChEBI" id="CHEBI:15379"/>
        <dbReference type="ChEBI" id="CHEBI:29033"/>
        <dbReference type="ChEBI" id="CHEBI:29034"/>
        <dbReference type="ChEBI" id="CHEBI:139048"/>
        <dbReference type="ChEBI" id="CHEBI:139051"/>
        <dbReference type="EC" id="1.14.18.5"/>
    </reaction>
</comment>
<comment type="cofactor">
    <cofactor evidence="1">
        <name>Fe cation</name>
        <dbReference type="ChEBI" id="CHEBI:24875"/>
    </cofactor>
</comment>
<comment type="pathway">
    <text>Membrane lipid metabolism; sphingolipid biosynthesis.</text>
</comment>
<comment type="subcellular location">
    <subcellularLocation>
        <location evidence="4">Endoplasmic reticulum membrane</location>
        <topology evidence="4">Multi-pass membrane protein</topology>
    </subcellularLocation>
</comment>
<comment type="tissue specificity">
    <text evidence="4">Ubiquitous, with higher levels in flowers and roots.</text>
</comment>
<comment type="domain">
    <text>The histidine box domains may contain the active site and/or be involved in metal ion binding.</text>
</comment>
<comment type="disruption phenotype">
    <text evidence="4">No visible phenotype; due to the redundancy with SBH2. Sbh1 and sbh2 double mutants are severely dwarfed, do not progress from vegetative to reproductive growth and have enhanced expression of programmed cell death associated-genes.</text>
</comment>
<comment type="similarity">
    <text evidence="5">Belongs to the sterol desaturase family.</text>
</comment>
<comment type="sequence caution" evidence="5">
    <conflict type="erroneous initiation">
        <sequence resource="EMBL-CDS" id="AAG12703"/>
    </conflict>
    <text>Truncated N-terminus.</text>
</comment>
<comment type="sequence caution" evidence="5">
    <conflict type="erroneous initiation">
        <sequence resource="EMBL-CDS" id="AAG52550"/>
    </conflict>
    <text>Truncated N-terminus.</text>
</comment>
<dbReference type="EC" id="1.14.18.5" evidence="3"/>
<dbReference type="EMBL" id="AC013289">
    <property type="protein sequence ID" value="AAG52550.1"/>
    <property type="status" value="ALT_INIT"/>
    <property type="molecule type" value="Genomic_DNA"/>
</dbReference>
<dbReference type="EMBL" id="AC021046">
    <property type="protein sequence ID" value="AAG12703.1"/>
    <property type="status" value="ALT_INIT"/>
    <property type="molecule type" value="Genomic_DNA"/>
</dbReference>
<dbReference type="EMBL" id="CP002684">
    <property type="protein sequence ID" value="AEE34958.1"/>
    <property type="molecule type" value="Genomic_DNA"/>
</dbReference>
<dbReference type="EMBL" id="AY070765">
    <property type="protein sequence ID" value="AAL50102.1"/>
    <property type="molecule type" value="mRNA"/>
</dbReference>
<dbReference type="EMBL" id="AY143918">
    <property type="protein sequence ID" value="AAN28857.1"/>
    <property type="molecule type" value="mRNA"/>
</dbReference>
<dbReference type="PIR" id="B96718">
    <property type="entry name" value="B96718"/>
</dbReference>
<dbReference type="RefSeq" id="NP_177122.2">
    <property type="nucleotide sequence ID" value="NM_105632.5"/>
</dbReference>
<dbReference type="SMR" id="Q8VYI1"/>
<dbReference type="BioGRID" id="28521">
    <property type="interactions" value="15"/>
</dbReference>
<dbReference type="FunCoup" id="Q8VYI1">
    <property type="interactions" value="627"/>
</dbReference>
<dbReference type="IntAct" id="Q8VYI1">
    <property type="interactions" value="15"/>
</dbReference>
<dbReference type="STRING" id="3702.Q8VYI1"/>
<dbReference type="PaxDb" id="3702-AT1G69640.1"/>
<dbReference type="ProteomicsDB" id="228153"/>
<dbReference type="EnsemblPlants" id="AT1G69640.1">
    <property type="protein sequence ID" value="AT1G69640.1"/>
    <property type="gene ID" value="AT1G69640"/>
</dbReference>
<dbReference type="GeneID" id="843300"/>
<dbReference type="Gramene" id="AT1G69640.1">
    <property type="protein sequence ID" value="AT1G69640.1"/>
    <property type="gene ID" value="AT1G69640"/>
</dbReference>
<dbReference type="KEGG" id="ath:AT1G69640"/>
<dbReference type="Araport" id="AT1G69640"/>
<dbReference type="TAIR" id="AT1G69640">
    <property type="gene designation" value="SBH1"/>
</dbReference>
<dbReference type="eggNOG" id="KOG0874">
    <property type="taxonomic scope" value="Eukaryota"/>
</dbReference>
<dbReference type="HOGENOM" id="CLU_043293_1_0_1"/>
<dbReference type="InParanoid" id="Q8VYI1"/>
<dbReference type="OMA" id="FETKPCK"/>
<dbReference type="OrthoDB" id="408954at2759"/>
<dbReference type="PhylomeDB" id="Q8VYI1"/>
<dbReference type="BioCyc" id="ARA:AT1G69640-MONOMER"/>
<dbReference type="BioCyc" id="MetaCyc:AT1G69640-MONOMER"/>
<dbReference type="UniPathway" id="UPA00786"/>
<dbReference type="PRO" id="PR:Q8VYI1"/>
<dbReference type="Proteomes" id="UP000006548">
    <property type="component" value="Chromosome 1"/>
</dbReference>
<dbReference type="ExpressionAtlas" id="Q8VYI1">
    <property type="expression patterns" value="baseline and differential"/>
</dbReference>
<dbReference type="GO" id="GO:0005783">
    <property type="term" value="C:endoplasmic reticulum"/>
    <property type="evidence" value="ECO:0000314"/>
    <property type="project" value="TAIR"/>
</dbReference>
<dbReference type="GO" id="GO:0005789">
    <property type="term" value="C:endoplasmic reticulum membrane"/>
    <property type="evidence" value="ECO:0007669"/>
    <property type="project" value="UniProtKB-SubCell"/>
</dbReference>
<dbReference type="GO" id="GO:0005794">
    <property type="term" value="C:Golgi apparatus"/>
    <property type="evidence" value="ECO:0000314"/>
    <property type="project" value="TAIR"/>
</dbReference>
<dbReference type="GO" id="GO:0005506">
    <property type="term" value="F:iron ion binding"/>
    <property type="evidence" value="ECO:0007669"/>
    <property type="project" value="InterPro"/>
</dbReference>
<dbReference type="GO" id="GO:0102772">
    <property type="term" value="F:sphingolipid C4-monooxygenase activity"/>
    <property type="evidence" value="ECO:0007669"/>
    <property type="project" value="UniProtKB-EC"/>
</dbReference>
<dbReference type="GO" id="GO:0009640">
    <property type="term" value="P:photomorphogenesis"/>
    <property type="evidence" value="ECO:0000315"/>
    <property type="project" value="TAIR"/>
</dbReference>
<dbReference type="GO" id="GO:0046520">
    <property type="term" value="P:sphingoid biosynthetic process"/>
    <property type="evidence" value="ECO:0000315"/>
    <property type="project" value="TAIR"/>
</dbReference>
<dbReference type="InterPro" id="IPR006694">
    <property type="entry name" value="Fatty_acid_hydroxylase"/>
</dbReference>
<dbReference type="InterPro" id="IPR050307">
    <property type="entry name" value="Sterol_Desaturase_Related"/>
</dbReference>
<dbReference type="PANTHER" id="PTHR11863">
    <property type="entry name" value="STEROL DESATURASE"/>
    <property type="match status" value="1"/>
</dbReference>
<dbReference type="Pfam" id="PF04116">
    <property type="entry name" value="FA_hydroxylase"/>
    <property type="match status" value="1"/>
</dbReference>
<feature type="chain" id="PRO_0000413166" description="Sphinganine C4-monooxygenase 1">
    <location>
        <begin position="1"/>
        <end position="260"/>
    </location>
</feature>
<feature type="transmembrane region" description="Helical" evidence="2">
    <location>
        <begin position="11"/>
        <end position="31"/>
    </location>
</feature>
<feature type="transmembrane region" description="Helical" evidence="2">
    <location>
        <begin position="55"/>
        <end position="75"/>
    </location>
</feature>
<feature type="transmembrane region" description="Helical" evidence="2">
    <location>
        <begin position="92"/>
        <end position="112"/>
    </location>
</feature>
<feature type="domain" description="Fatty acid hydroxylase" evidence="2">
    <location>
        <begin position="99"/>
        <end position="235"/>
    </location>
</feature>
<feature type="short sequence motif" description="Histidine box-1">
    <location>
        <begin position="114"/>
        <end position="118"/>
    </location>
</feature>
<feature type="short sequence motif" description="Histidine box-2">
    <location>
        <begin position="128"/>
        <end position="132"/>
    </location>
</feature>
<feature type="short sequence motif" description="Histidine box-3">
    <location>
        <begin position="207"/>
        <end position="213"/>
    </location>
</feature>
<organism>
    <name type="scientific">Arabidopsis thaliana</name>
    <name type="common">Mouse-ear cress</name>
    <dbReference type="NCBI Taxonomy" id="3702"/>
    <lineage>
        <taxon>Eukaryota</taxon>
        <taxon>Viridiplantae</taxon>
        <taxon>Streptophyta</taxon>
        <taxon>Embryophyta</taxon>
        <taxon>Tracheophyta</taxon>
        <taxon>Spermatophyta</taxon>
        <taxon>Magnoliopsida</taxon>
        <taxon>eudicotyledons</taxon>
        <taxon>Gunneridae</taxon>
        <taxon>Pentapetalae</taxon>
        <taxon>rosids</taxon>
        <taxon>malvids</taxon>
        <taxon>Brassicales</taxon>
        <taxon>Brassicaceae</taxon>
        <taxon>Camelineae</taxon>
        <taxon>Arabidopsis</taxon>
    </lineage>
</organism>
<proteinExistence type="evidence at protein level"/>
<name>SBH1_ARATH</name>
<sequence length="260" mass="29819">MMMGFAVSDELLGTVAPIVVYWLYSGIYVALSSLESYRLHSKVEEEEKNLVSKSSVVKGVLVQQVVQAVVAILLFTVTGSDAEADKAQQFSFLVLARQFVTAMIVLDTWQYFMHRYMHQNKFLYKHIHSQHHRLIVPYAYGALYNHPVEGLLLDTIGGALSFLVSGMSPRTSIFFFSFATIKTVDDHCGLWLPGNLFHMVFKNNSAYHDIHHQLYGTKYNFSQPFFVMWDRILGTYMPYSLEKREDGGFEARPTKEFKDD</sequence>
<keyword id="KW-0256">Endoplasmic reticulum</keyword>
<keyword id="KW-0444">Lipid biosynthesis</keyword>
<keyword id="KW-0443">Lipid metabolism</keyword>
<keyword id="KW-0472">Membrane</keyword>
<keyword id="KW-0560">Oxidoreductase</keyword>
<keyword id="KW-1185">Reference proteome</keyword>
<keyword id="KW-0812">Transmembrane</keyword>
<keyword id="KW-1133">Transmembrane helix</keyword>
<accession>Q8VYI1</accession>
<accession>Q9FWZ2</accession>
<evidence type="ECO:0000250" key="1"/>
<evidence type="ECO:0000255" key="2"/>
<evidence type="ECO:0000269" key="3">
    <source>
    </source>
</evidence>
<evidence type="ECO:0000269" key="4">
    <source>
    </source>
</evidence>
<evidence type="ECO:0000305" key="5"/>
<gene>
    <name type="primary">SBH1</name>
    <name type="ordered locus">At1g69640</name>
    <name type="ORF">F24J1.22</name>
    <name type="ORF">T6C23.16</name>
</gene>
<reference key="1">
    <citation type="journal article" date="2001" name="FEBS Lett.">
        <title>Functional characterization of sphingolipid C4-hydroxylase genes from Arabidopsis thaliana.</title>
        <authorList>
            <person name="Sperling P."/>
            <person name="Ternes P."/>
            <person name="Moll H."/>
            <person name="Franke S."/>
            <person name="Zaehringer U."/>
            <person name="Heinz E."/>
        </authorList>
    </citation>
    <scope>NUCLEOTIDE SEQUENCE [MRNA]</scope>
    <scope>FUNCTION</scope>
    <scope>CATALYTIC ACTIVITY</scope>
</reference>
<reference key="2">
    <citation type="journal article" date="2000" name="Nature">
        <title>Sequence and analysis of chromosome 1 of the plant Arabidopsis thaliana.</title>
        <authorList>
            <person name="Theologis A."/>
            <person name="Ecker J.R."/>
            <person name="Palm C.J."/>
            <person name="Federspiel N.A."/>
            <person name="Kaul S."/>
            <person name="White O."/>
            <person name="Alonso J."/>
            <person name="Altafi H."/>
            <person name="Araujo R."/>
            <person name="Bowman C.L."/>
            <person name="Brooks S.Y."/>
            <person name="Buehler E."/>
            <person name="Chan A."/>
            <person name="Chao Q."/>
            <person name="Chen H."/>
            <person name="Cheuk R.F."/>
            <person name="Chin C.W."/>
            <person name="Chung M.K."/>
            <person name="Conn L."/>
            <person name="Conway A.B."/>
            <person name="Conway A.R."/>
            <person name="Creasy T.H."/>
            <person name="Dewar K."/>
            <person name="Dunn P."/>
            <person name="Etgu P."/>
            <person name="Feldblyum T.V."/>
            <person name="Feng J.-D."/>
            <person name="Fong B."/>
            <person name="Fujii C.Y."/>
            <person name="Gill J.E."/>
            <person name="Goldsmith A.D."/>
            <person name="Haas B."/>
            <person name="Hansen N.F."/>
            <person name="Hughes B."/>
            <person name="Huizar L."/>
            <person name="Hunter J.L."/>
            <person name="Jenkins J."/>
            <person name="Johnson-Hopson C."/>
            <person name="Khan S."/>
            <person name="Khaykin E."/>
            <person name="Kim C.J."/>
            <person name="Koo H.L."/>
            <person name="Kremenetskaia I."/>
            <person name="Kurtz D.B."/>
            <person name="Kwan A."/>
            <person name="Lam B."/>
            <person name="Langin-Hooper S."/>
            <person name="Lee A."/>
            <person name="Lee J.M."/>
            <person name="Lenz C.A."/>
            <person name="Li J.H."/>
            <person name="Li Y.-P."/>
            <person name="Lin X."/>
            <person name="Liu S.X."/>
            <person name="Liu Z.A."/>
            <person name="Luros J.S."/>
            <person name="Maiti R."/>
            <person name="Marziali A."/>
            <person name="Militscher J."/>
            <person name="Miranda M."/>
            <person name="Nguyen M."/>
            <person name="Nierman W.C."/>
            <person name="Osborne B.I."/>
            <person name="Pai G."/>
            <person name="Peterson J."/>
            <person name="Pham P.K."/>
            <person name="Rizzo M."/>
            <person name="Rooney T."/>
            <person name="Rowley D."/>
            <person name="Sakano H."/>
            <person name="Salzberg S.L."/>
            <person name="Schwartz J.R."/>
            <person name="Shinn P."/>
            <person name="Southwick A.M."/>
            <person name="Sun H."/>
            <person name="Tallon L.J."/>
            <person name="Tambunga G."/>
            <person name="Toriumi M.J."/>
            <person name="Town C.D."/>
            <person name="Utterback T."/>
            <person name="Van Aken S."/>
            <person name="Vaysberg M."/>
            <person name="Vysotskaia V.S."/>
            <person name="Walker M."/>
            <person name="Wu D."/>
            <person name="Yu G."/>
            <person name="Fraser C.M."/>
            <person name="Venter J.C."/>
            <person name="Davis R.W."/>
        </authorList>
    </citation>
    <scope>NUCLEOTIDE SEQUENCE [LARGE SCALE GENOMIC DNA]</scope>
    <source>
        <strain>cv. Columbia</strain>
    </source>
</reference>
<reference key="3">
    <citation type="journal article" date="2017" name="Plant J.">
        <title>Araport11: a complete reannotation of the Arabidopsis thaliana reference genome.</title>
        <authorList>
            <person name="Cheng C.Y."/>
            <person name="Krishnakumar V."/>
            <person name="Chan A.P."/>
            <person name="Thibaud-Nissen F."/>
            <person name="Schobel S."/>
            <person name="Town C.D."/>
        </authorList>
    </citation>
    <scope>GENOME REANNOTATION</scope>
    <source>
        <strain>cv. Columbia</strain>
    </source>
</reference>
<reference key="4">
    <citation type="journal article" date="2003" name="Science">
        <title>Empirical analysis of transcriptional activity in the Arabidopsis genome.</title>
        <authorList>
            <person name="Yamada K."/>
            <person name="Lim J."/>
            <person name="Dale J.M."/>
            <person name="Chen H."/>
            <person name="Shinn P."/>
            <person name="Palm C.J."/>
            <person name="Southwick A.M."/>
            <person name="Wu H.C."/>
            <person name="Kim C.J."/>
            <person name="Nguyen M."/>
            <person name="Pham P.K."/>
            <person name="Cheuk R.F."/>
            <person name="Karlin-Newmann G."/>
            <person name="Liu S.X."/>
            <person name="Lam B."/>
            <person name="Sakano H."/>
            <person name="Wu T."/>
            <person name="Yu G."/>
            <person name="Miranda M."/>
            <person name="Quach H.L."/>
            <person name="Tripp M."/>
            <person name="Chang C.H."/>
            <person name="Lee J.M."/>
            <person name="Toriumi M.J."/>
            <person name="Chan M.M."/>
            <person name="Tang C.C."/>
            <person name="Onodera C.S."/>
            <person name="Deng J.M."/>
            <person name="Akiyama K."/>
            <person name="Ansari Y."/>
            <person name="Arakawa T."/>
            <person name="Banh J."/>
            <person name="Banno F."/>
            <person name="Bowser L."/>
            <person name="Brooks S.Y."/>
            <person name="Carninci P."/>
            <person name="Chao Q."/>
            <person name="Choy N."/>
            <person name="Enju A."/>
            <person name="Goldsmith A.D."/>
            <person name="Gurjal M."/>
            <person name="Hansen N.F."/>
            <person name="Hayashizaki Y."/>
            <person name="Johnson-Hopson C."/>
            <person name="Hsuan V.W."/>
            <person name="Iida K."/>
            <person name="Karnes M."/>
            <person name="Khan S."/>
            <person name="Koesema E."/>
            <person name="Ishida J."/>
            <person name="Jiang P.X."/>
            <person name="Jones T."/>
            <person name="Kawai J."/>
            <person name="Kamiya A."/>
            <person name="Meyers C."/>
            <person name="Nakajima M."/>
            <person name="Narusaka M."/>
            <person name="Seki M."/>
            <person name="Sakurai T."/>
            <person name="Satou M."/>
            <person name="Tamse R."/>
            <person name="Vaysberg M."/>
            <person name="Wallender E.K."/>
            <person name="Wong C."/>
            <person name="Yamamura Y."/>
            <person name="Yuan S."/>
            <person name="Shinozaki K."/>
            <person name="Davis R.W."/>
            <person name="Theologis A."/>
            <person name="Ecker J.R."/>
        </authorList>
    </citation>
    <scope>NUCLEOTIDE SEQUENCE [LARGE SCALE MRNA]</scope>
    <source>
        <strain>cv. Columbia</strain>
    </source>
</reference>
<reference key="5">
    <citation type="journal article" date="2008" name="Plant Cell">
        <title>Sphingolipid long-chain base hydroxylation is important for growth and regulation of sphingolipid content and composition in Arabidopsis.</title>
        <authorList>
            <person name="Chen M."/>
            <person name="Markham J.E."/>
            <person name="Dietrich C.R."/>
            <person name="Jaworski J.G."/>
            <person name="Cahoon E.B."/>
        </authorList>
    </citation>
    <scope>FUNCTION</scope>
    <scope>TISSUE SPECIFICITY</scope>
    <scope>SUBCELLULAR LOCATION</scope>
    <scope>DISRUPTION PHENOTYPE</scope>
</reference>
<protein>
    <recommendedName>
        <fullName>Sphinganine C4-monooxygenase 1</fullName>
        <ecNumber evidence="3">1.14.18.5</ecNumber>
    </recommendedName>
    <alternativeName>
        <fullName>Sphingoid C4-hydroxylase 1</fullName>
    </alternativeName>
    <alternativeName>
        <fullName>Sphingoid base hydroxylase 1</fullName>
    </alternativeName>
</protein>